<protein>
    <recommendedName>
        <fullName>Leucine-rich glioma-inactivated protein 1</fullName>
    </recommendedName>
</protein>
<proteinExistence type="evidence at transcript level"/>
<organism>
    <name type="scientific">Pan troglodytes</name>
    <name type="common">Chimpanzee</name>
    <dbReference type="NCBI Taxonomy" id="9598"/>
    <lineage>
        <taxon>Eukaryota</taxon>
        <taxon>Metazoa</taxon>
        <taxon>Chordata</taxon>
        <taxon>Craniata</taxon>
        <taxon>Vertebrata</taxon>
        <taxon>Euteleostomi</taxon>
        <taxon>Mammalia</taxon>
        <taxon>Eutheria</taxon>
        <taxon>Euarchontoglires</taxon>
        <taxon>Primates</taxon>
        <taxon>Haplorrhini</taxon>
        <taxon>Catarrhini</taxon>
        <taxon>Hominidae</taxon>
        <taxon>Pan</taxon>
    </lineage>
</organism>
<comment type="function">
    <text evidence="1">Regulates voltage-gated potassium channels assembled from KCNA1, KCNA4 and KCNAB1. It slows down channel inactivation by precluding channel closure mediated by the KCNAB1 subunit. Ligand for ADAM22 that positively regulates synaptic transmission mediated by AMPA-type glutamate receptors. Plays a role in suppressing the production of MMP1/3 through the phosphatidylinositol 3-kinase/ERK pathway (By similarity).</text>
</comment>
<comment type="subunit">
    <text evidence="1">Oligomer. Interacts with KCNA1 within a complex containing KCNA1, KCNA4 and KCNAB1. Part of a complex containing ADAM22, DLG4/PSD95 and CACNG2 (stargazin). Can bind to ADAM11 and ADAM23.</text>
</comment>
<comment type="subcellular location">
    <subcellularLocation>
        <location evidence="3">Secreted</location>
    </subcellularLocation>
    <subcellularLocation>
        <location evidence="2">Synapse</location>
    </subcellularLocation>
    <subcellularLocation>
        <location evidence="3">Cytoplasm</location>
    </subcellularLocation>
</comment>
<comment type="PTM">
    <text evidence="1">Glycosylated.</text>
</comment>
<dbReference type="EMBL" id="AY615298">
    <property type="protein sequence ID" value="AAV49150.1"/>
    <property type="molecule type" value="mRNA"/>
</dbReference>
<dbReference type="RefSeq" id="NP_001065246.1">
    <property type="nucleotide sequence ID" value="NM_001071778.1"/>
</dbReference>
<dbReference type="SMR" id="Q1EGL2"/>
<dbReference type="FunCoup" id="Q1EGL2">
    <property type="interactions" value="225"/>
</dbReference>
<dbReference type="STRING" id="9598.ENSPTRP00000083692"/>
<dbReference type="GlyCosmos" id="Q1EGL2">
    <property type="glycosylation" value="3 sites, No reported glycans"/>
</dbReference>
<dbReference type="PaxDb" id="9598-ENSPTRP00000004835"/>
<dbReference type="Ensembl" id="ENSPTRT00000086732.1">
    <property type="protein sequence ID" value="ENSPTRP00000083692.1"/>
    <property type="gene ID" value="ENSPTRG00000002771.4"/>
</dbReference>
<dbReference type="GeneID" id="450619"/>
<dbReference type="KEGG" id="ptr:450619"/>
<dbReference type="CTD" id="9211"/>
<dbReference type="eggNOG" id="ENOG502REXX">
    <property type="taxonomic scope" value="Eukaryota"/>
</dbReference>
<dbReference type="GeneTree" id="ENSGT00940000159793"/>
<dbReference type="HOGENOM" id="CLU_036403_0_0_1"/>
<dbReference type="InParanoid" id="Q1EGL2"/>
<dbReference type="OrthoDB" id="2097at9604"/>
<dbReference type="TreeFam" id="TF333155"/>
<dbReference type="Proteomes" id="UP000002277">
    <property type="component" value="Chromosome 10"/>
</dbReference>
<dbReference type="Bgee" id="ENSPTRG00000002771">
    <property type="expression patterns" value="Expressed in primary visual cortex and 15 other cell types or tissues"/>
</dbReference>
<dbReference type="GO" id="GO:0005737">
    <property type="term" value="C:cytoplasm"/>
    <property type="evidence" value="ECO:0000250"/>
    <property type="project" value="UniProtKB"/>
</dbReference>
<dbReference type="GO" id="GO:0005615">
    <property type="term" value="C:extracellular space"/>
    <property type="evidence" value="ECO:0000250"/>
    <property type="project" value="UniProtKB"/>
</dbReference>
<dbReference type="GO" id="GO:0098978">
    <property type="term" value="C:glutamatergic synapse"/>
    <property type="evidence" value="ECO:0007669"/>
    <property type="project" value="Ensembl"/>
</dbReference>
<dbReference type="GO" id="GO:0043083">
    <property type="term" value="C:synaptic cleft"/>
    <property type="evidence" value="ECO:0007669"/>
    <property type="project" value="Ensembl"/>
</dbReference>
<dbReference type="GO" id="GO:0048018">
    <property type="term" value="F:receptor ligand activity"/>
    <property type="evidence" value="ECO:0000250"/>
    <property type="project" value="UniProtKB"/>
</dbReference>
<dbReference type="GO" id="GO:0007411">
    <property type="term" value="P:axon guidance"/>
    <property type="evidence" value="ECO:0007669"/>
    <property type="project" value="Ensembl"/>
</dbReference>
<dbReference type="GO" id="GO:0099645">
    <property type="term" value="P:neurotransmitter receptor localization to postsynaptic specialization membrane"/>
    <property type="evidence" value="ECO:0007669"/>
    <property type="project" value="Ensembl"/>
</dbReference>
<dbReference type="GO" id="GO:0030307">
    <property type="term" value="P:positive regulation of cell growth"/>
    <property type="evidence" value="ECO:0007669"/>
    <property type="project" value="Ensembl"/>
</dbReference>
<dbReference type="GO" id="GO:0050806">
    <property type="term" value="P:positive regulation of synaptic transmission"/>
    <property type="evidence" value="ECO:0000250"/>
    <property type="project" value="UniProtKB"/>
</dbReference>
<dbReference type="FunFam" id="3.80.10.10:FF:000017">
    <property type="entry name" value="leucine-rich repeat LGI family member 3"/>
    <property type="match status" value="1"/>
</dbReference>
<dbReference type="Gene3D" id="3.80.10.10">
    <property type="entry name" value="Ribonuclease Inhibitor"/>
    <property type="match status" value="1"/>
</dbReference>
<dbReference type="InterPro" id="IPR000483">
    <property type="entry name" value="Cys-rich_flank_reg_C"/>
</dbReference>
<dbReference type="InterPro" id="IPR009039">
    <property type="entry name" value="EAR"/>
</dbReference>
<dbReference type="InterPro" id="IPR005492">
    <property type="entry name" value="EPTP"/>
</dbReference>
<dbReference type="InterPro" id="IPR001611">
    <property type="entry name" value="Leu-rich_rpt"/>
</dbReference>
<dbReference type="InterPro" id="IPR003591">
    <property type="entry name" value="Leu-rich_rpt_typical-subtyp"/>
</dbReference>
<dbReference type="InterPro" id="IPR051295">
    <property type="entry name" value="LGI_related"/>
</dbReference>
<dbReference type="InterPro" id="IPR032675">
    <property type="entry name" value="LRR_dom_sf"/>
</dbReference>
<dbReference type="PANTHER" id="PTHR24367:SF17">
    <property type="entry name" value="LEUCINE-RICH GLIOMA-INACTIVATED PROTEIN 1"/>
    <property type="match status" value="1"/>
</dbReference>
<dbReference type="PANTHER" id="PTHR24367">
    <property type="entry name" value="LEUCINE-RICH REPEAT-CONTAINING PROTEIN"/>
    <property type="match status" value="1"/>
</dbReference>
<dbReference type="Pfam" id="PF03736">
    <property type="entry name" value="EPTP"/>
    <property type="match status" value="7"/>
</dbReference>
<dbReference type="Pfam" id="PF13855">
    <property type="entry name" value="LRR_8"/>
    <property type="match status" value="1"/>
</dbReference>
<dbReference type="SMART" id="SM00369">
    <property type="entry name" value="LRR_TYP"/>
    <property type="match status" value="3"/>
</dbReference>
<dbReference type="SMART" id="SM00082">
    <property type="entry name" value="LRRCT"/>
    <property type="match status" value="1"/>
</dbReference>
<dbReference type="SUPFAM" id="SSF52058">
    <property type="entry name" value="L domain-like"/>
    <property type="match status" value="1"/>
</dbReference>
<dbReference type="PROSITE" id="PS50912">
    <property type="entry name" value="EAR"/>
    <property type="match status" value="7"/>
</dbReference>
<reference key="1">
    <citation type="submission" date="2004-05" db="EMBL/GenBank/DDBJ databases">
        <title>The evolution of the LGI family.</title>
        <authorList>
            <person name="Gu W."/>
            <person name="Gilbert Y."/>
            <person name="Freudenberg J."/>
            <person name="Elischer A."/>
            <person name="Bloch W."/>
            <person name="Meyer A."/>
            <person name="Steinlein O."/>
            <person name="Begemann G."/>
        </authorList>
    </citation>
    <scope>NUCLEOTIDE SEQUENCE [MRNA]</scope>
</reference>
<gene>
    <name type="primary">LGI1</name>
</gene>
<accession>Q1EGL2</accession>
<sequence>MESERSKRMGNACIPLKRIAYFLCLLSALLLTEGKKPAKPKCPAVCTCTKDNALCENARSIPRTVPPDVISLSFVRSGFTEISEGSFLFTPSLQLLLFTSNSFDVISDDAFIGLPHLEYLFIENNNIKSISRHTFRGLKSLIHLSLANNNLQTLPKDIFKGLDSLTNVDLRGNSFNCDCKLKWLVEWLGHTNATVEDIYCEGPPEYKKRKINSLSSKDFDCIITEFAKSQDLPYQSLSIDTFSYLNDEYVVIAQPFTGKCIFLEWDHVEKTFRNYDNITGTSTVVCKPIVIETQLYVIVAQLFGGSHIYKRDSFANKFIKIQDIEILKIRKPNDIETFKIENNWYFVVADSSKAGFTTIYKWNGNGFYSHQSLHAWYRDTDVEYLEIVRTPQTLRTPHLILSSSSQRPVIYQWNKATQSFTNQTDIPNMEDVYAVKHFSVKGDVYICLTRFIGDSKVMKWGGSSFQDIQRMPSRGSMVFQPLQINNYQYAILGSDYSFTQVYNWDAEKAKFVKFQELNVQAPRSFTHVSINKRNFLFASSFKGNTQIYKHVIVDLSA</sequence>
<keyword id="KW-0963">Cytoplasm</keyword>
<keyword id="KW-0325">Glycoprotein</keyword>
<keyword id="KW-0433">Leucine-rich repeat</keyword>
<keyword id="KW-1185">Reference proteome</keyword>
<keyword id="KW-0677">Repeat</keyword>
<keyword id="KW-0964">Secreted</keyword>
<keyword id="KW-0732">Signal</keyword>
<keyword id="KW-0770">Synapse</keyword>
<evidence type="ECO:0000250" key="1"/>
<evidence type="ECO:0000250" key="2">
    <source>
        <dbReference type="UniProtKB" id="Q8K4Y5"/>
    </source>
</evidence>
<evidence type="ECO:0000250" key="3">
    <source>
        <dbReference type="UniProtKB" id="Q9JIA1"/>
    </source>
</evidence>
<evidence type="ECO:0000255" key="4"/>
<evidence type="ECO:0000255" key="5">
    <source>
        <dbReference type="PROSITE-ProRule" id="PRU00075"/>
    </source>
</evidence>
<name>LGI1_PANTR</name>
<feature type="signal peptide" evidence="4">
    <location>
        <begin position="1"/>
        <end position="34"/>
    </location>
</feature>
<feature type="chain" id="PRO_0000251155" description="Leucine-rich glioma-inactivated protein 1">
    <location>
        <begin position="35"/>
        <end position="557"/>
    </location>
</feature>
<feature type="domain" description="LRRNT">
    <location>
        <begin position="35"/>
        <end position="72"/>
    </location>
</feature>
<feature type="repeat" description="LRR 1">
    <location>
        <begin position="92"/>
        <end position="113"/>
    </location>
</feature>
<feature type="repeat" description="LRR 2">
    <location>
        <begin position="116"/>
        <end position="137"/>
    </location>
</feature>
<feature type="repeat" description="LRR 3">
    <location>
        <begin position="140"/>
        <end position="161"/>
    </location>
</feature>
<feature type="domain" description="LRRCT">
    <location>
        <begin position="173"/>
        <end position="223"/>
    </location>
</feature>
<feature type="repeat" description="EAR 1" evidence="5">
    <location>
        <begin position="225"/>
        <end position="267"/>
    </location>
</feature>
<feature type="repeat" description="EAR 2" evidence="5">
    <location>
        <begin position="271"/>
        <end position="313"/>
    </location>
</feature>
<feature type="repeat" description="EAR 3" evidence="5">
    <location>
        <begin position="317"/>
        <end position="364"/>
    </location>
</feature>
<feature type="repeat" description="EAR 4" evidence="5">
    <location>
        <begin position="366"/>
        <end position="415"/>
    </location>
</feature>
<feature type="repeat" description="EAR 5" evidence="5">
    <location>
        <begin position="419"/>
        <end position="462"/>
    </location>
</feature>
<feature type="repeat" description="EAR 6" evidence="5">
    <location>
        <begin position="464"/>
        <end position="506"/>
    </location>
</feature>
<feature type="repeat" description="EAR 7" evidence="5">
    <location>
        <begin position="510"/>
        <end position="552"/>
    </location>
</feature>
<feature type="glycosylation site" description="N-linked (GlcNAc...) asparagine" evidence="4">
    <location>
        <position position="192"/>
    </location>
</feature>
<feature type="glycosylation site" description="N-linked (GlcNAc...) asparagine" evidence="4">
    <location>
        <position position="277"/>
    </location>
</feature>
<feature type="glycosylation site" description="N-linked (GlcNAc...) asparagine" evidence="4">
    <location>
        <position position="422"/>
    </location>
</feature>